<dbReference type="EMBL" id="AE001439">
    <property type="protein sequence ID" value="AAD06365.1"/>
    <property type="molecule type" value="Genomic_DNA"/>
</dbReference>
<dbReference type="PIR" id="E64628">
    <property type="entry name" value="E64628"/>
</dbReference>
<dbReference type="RefSeq" id="WP_000545280.1">
    <property type="nucleotide sequence ID" value="NZ_CP011330.1"/>
</dbReference>
<dbReference type="PDB" id="6G81">
    <property type="method" value="NMR"/>
    <property type="chains" value="A=1-117"/>
</dbReference>
<dbReference type="PDBsum" id="6G81"/>
<dbReference type="BMRB" id="P0A0U5"/>
<dbReference type="SMR" id="P0A0U5"/>
<dbReference type="KEGG" id="hpj:jhp_0803"/>
<dbReference type="PATRIC" id="fig|85963.30.peg.169"/>
<dbReference type="eggNOG" id="COG0375">
    <property type="taxonomic scope" value="Bacteria"/>
</dbReference>
<dbReference type="Proteomes" id="UP000000804">
    <property type="component" value="Chromosome"/>
</dbReference>
<dbReference type="GO" id="GO:0016151">
    <property type="term" value="F:nickel cation binding"/>
    <property type="evidence" value="ECO:0007669"/>
    <property type="project" value="UniProtKB-UniRule"/>
</dbReference>
<dbReference type="GO" id="GO:0008270">
    <property type="term" value="F:zinc ion binding"/>
    <property type="evidence" value="ECO:0007669"/>
    <property type="project" value="UniProtKB-UniRule"/>
</dbReference>
<dbReference type="GO" id="GO:0051604">
    <property type="term" value="P:protein maturation"/>
    <property type="evidence" value="ECO:0007669"/>
    <property type="project" value="InterPro"/>
</dbReference>
<dbReference type="GO" id="GO:0036211">
    <property type="term" value="P:protein modification process"/>
    <property type="evidence" value="ECO:0007669"/>
    <property type="project" value="UniProtKB-UniRule"/>
</dbReference>
<dbReference type="Gene3D" id="3.30.2320.80">
    <property type="match status" value="1"/>
</dbReference>
<dbReference type="HAMAP" id="MF_00213">
    <property type="entry name" value="HypA_HybF"/>
    <property type="match status" value="1"/>
</dbReference>
<dbReference type="InterPro" id="IPR020538">
    <property type="entry name" value="Hydgase_Ni_incorp_HypA/HybF_CS"/>
</dbReference>
<dbReference type="InterPro" id="IPR000688">
    <property type="entry name" value="HypA/HybF"/>
</dbReference>
<dbReference type="NCBIfam" id="TIGR00100">
    <property type="entry name" value="hypA"/>
    <property type="match status" value="1"/>
</dbReference>
<dbReference type="NCBIfam" id="NF001839">
    <property type="entry name" value="PRK00564.1"/>
    <property type="match status" value="1"/>
</dbReference>
<dbReference type="PANTHER" id="PTHR34535">
    <property type="entry name" value="HYDROGENASE MATURATION FACTOR HYPA"/>
    <property type="match status" value="1"/>
</dbReference>
<dbReference type="PANTHER" id="PTHR34535:SF3">
    <property type="entry name" value="HYDROGENASE MATURATION FACTOR HYPA"/>
    <property type="match status" value="1"/>
</dbReference>
<dbReference type="Pfam" id="PF01155">
    <property type="entry name" value="HypA"/>
    <property type="match status" value="1"/>
</dbReference>
<dbReference type="PIRSF" id="PIRSF004761">
    <property type="entry name" value="Hydrgn_mat_HypA"/>
    <property type="match status" value="1"/>
</dbReference>
<dbReference type="PROSITE" id="PS01249">
    <property type="entry name" value="HYPA"/>
    <property type="match status" value="1"/>
</dbReference>
<organism>
    <name type="scientific">Helicobacter pylori (strain J99 / ATCC 700824)</name>
    <name type="common">Campylobacter pylori J99</name>
    <dbReference type="NCBI Taxonomy" id="85963"/>
    <lineage>
        <taxon>Bacteria</taxon>
        <taxon>Pseudomonadati</taxon>
        <taxon>Campylobacterota</taxon>
        <taxon>Epsilonproteobacteria</taxon>
        <taxon>Campylobacterales</taxon>
        <taxon>Helicobacteraceae</taxon>
        <taxon>Helicobacter</taxon>
    </lineage>
</organism>
<name>HYPA_HELPJ</name>
<sequence>MHEYSVVSSLIALCEEHAKKNQAHKIERVVVGIGERSAMDKSLFVSAFETFREESLVCKDAILDIVDEKVELECKDCSHVFKPNALDYGVCEKCHSKNVIITQGNEMRLLSLEMLAE</sequence>
<protein>
    <recommendedName>
        <fullName evidence="1">Hydrogenase maturation factor HypA</fullName>
    </recommendedName>
</protein>
<gene>
    <name evidence="1" type="primary">hypA</name>
    <name type="ordered locus">jhp_0803</name>
</gene>
<evidence type="ECO:0000255" key="1">
    <source>
        <dbReference type="HAMAP-Rule" id="MF_00213"/>
    </source>
</evidence>
<evidence type="ECO:0000305" key="2"/>
<evidence type="ECO:0007829" key="3">
    <source>
        <dbReference type="PDB" id="6G81"/>
    </source>
</evidence>
<keyword id="KW-0002">3D-structure</keyword>
<keyword id="KW-0479">Metal-binding</keyword>
<keyword id="KW-0533">Nickel</keyword>
<keyword id="KW-0862">Zinc</keyword>
<accession>P0A0U5</accession>
<accession>O25539</accession>
<feature type="chain" id="PRO_0000129043" description="Hydrogenase maturation factor HypA">
    <location>
        <begin position="1"/>
        <end position="117"/>
    </location>
</feature>
<feature type="binding site" evidence="1">
    <location>
        <position position="2"/>
    </location>
    <ligand>
        <name>Ni(2+)</name>
        <dbReference type="ChEBI" id="CHEBI:49786"/>
    </ligand>
</feature>
<feature type="binding site" evidence="1">
    <location>
        <position position="74"/>
    </location>
    <ligand>
        <name>Zn(2+)</name>
        <dbReference type="ChEBI" id="CHEBI:29105"/>
    </ligand>
</feature>
<feature type="binding site" evidence="1">
    <location>
        <position position="77"/>
    </location>
    <ligand>
        <name>Zn(2+)</name>
        <dbReference type="ChEBI" id="CHEBI:29105"/>
    </ligand>
</feature>
<feature type="binding site" evidence="1">
    <location>
        <position position="91"/>
    </location>
    <ligand>
        <name>Zn(2+)</name>
        <dbReference type="ChEBI" id="CHEBI:29105"/>
    </ligand>
</feature>
<feature type="binding site" evidence="1">
    <location>
        <position position="94"/>
    </location>
    <ligand>
        <name>Zn(2+)</name>
        <dbReference type="ChEBI" id="CHEBI:29105"/>
    </ligand>
</feature>
<feature type="helix" evidence="3">
    <location>
        <begin position="3"/>
        <end position="20"/>
    </location>
</feature>
<feature type="strand" evidence="3">
    <location>
        <begin position="23"/>
        <end position="34"/>
    </location>
</feature>
<feature type="helix" evidence="3">
    <location>
        <begin position="41"/>
        <end position="52"/>
    </location>
</feature>
<feature type="turn" evidence="3">
    <location>
        <begin position="56"/>
        <end position="60"/>
    </location>
</feature>
<feature type="strand" evidence="3">
    <location>
        <begin position="62"/>
        <end position="68"/>
    </location>
</feature>
<feature type="strand" evidence="3">
    <location>
        <begin position="71"/>
        <end position="74"/>
    </location>
</feature>
<feature type="strand" evidence="3">
    <location>
        <begin position="92"/>
        <end position="94"/>
    </location>
</feature>
<feature type="strand" evidence="3">
    <location>
        <begin position="99"/>
        <end position="106"/>
    </location>
</feature>
<feature type="strand" evidence="3">
    <location>
        <begin position="108"/>
        <end position="116"/>
    </location>
</feature>
<proteinExistence type="evidence at protein level"/>
<comment type="function">
    <text evidence="1">Involved in the maturation of [NiFe] hydrogenases. Required for nickel insertion into the metal center of the hydrogenase.</text>
</comment>
<comment type="similarity">
    <text evidence="1 2">Belongs to the HypA/HybF family.</text>
</comment>
<reference key="1">
    <citation type="journal article" date="1999" name="Nature">
        <title>Genomic sequence comparison of two unrelated isolates of the human gastric pathogen Helicobacter pylori.</title>
        <authorList>
            <person name="Alm R.A."/>
            <person name="Ling L.-S.L."/>
            <person name="Moir D.T."/>
            <person name="King B.L."/>
            <person name="Brown E.D."/>
            <person name="Doig P.C."/>
            <person name="Smith D.R."/>
            <person name="Noonan B."/>
            <person name="Guild B.C."/>
            <person name="deJonge B.L."/>
            <person name="Carmel G."/>
            <person name="Tummino P.J."/>
            <person name="Caruso A."/>
            <person name="Uria-Nickelsen M."/>
            <person name="Mills D.M."/>
            <person name="Ives C."/>
            <person name="Gibson R."/>
            <person name="Merberg D."/>
            <person name="Mills S.D."/>
            <person name="Jiang Q."/>
            <person name="Taylor D.E."/>
            <person name="Vovis G.F."/>
            <person name="Trust T.J."/>
        </authorList>
    </citation>
    <scope>NUCLEOTIDE SEQUENCE [LARGE SCALE GENOMIC DNA]</scope>
    <source>
        <strain>J99 / ATCC 700824</strain>
    </source>
</reference>